<sequence>MDQQLKAVSKFLSYILRHRPEAISLELNAGGWAAISELIQCASKHDHFLSEEIIKEVVVSNDKKRFKLSEDGQYIRANQGHSIRVDLDLLPLTPPDVLFHGTATRFLASIMAKGLLPSGRQHVHLSASYETAIAVGRRHGKPTVLEINAQKMQGDGYLFYRSENGVWLTDHVPAQYFVEVE</sequence>
<keyword id="KW-0520">NAD</keyword>
<keyword id="KW-1185">Reference proteome</keyword>
<keyword id="KW-0808">Transferase</keyword>
<dbReference type="EC" id="2.7.1.-" evidence="1"/>
<dbReference type="EMBL" id="CP000828">
    <property type="protein sequence ID" value="ABW29582.1"/>
    <property type="molecule type" value="Genomic_DNA"/>
</dbReference>
<dbReference type="RefSeq" id="WP_012164885.1">
    <property type="nucleotide sequence ID" value="NC_009925.1"/>
</dbReference>
<dbReference type="SMR" id="B0C090"/>
<dbReference type="STRING" id="329726.AM1_4608"/>
<dbReference type="KEGG" id="amr:AM1_4608"/>
<dbReference type="eggNOG" id="COG1859">
    <property type="taxonomic scope" value="Bacteria"/>
</dbReference>
<dbReference type="HOGENOM" id="CLU_052998_4_0_3"/>
<dbReference type="OrthoDB" id="4537997at2"/>
<dbReference type="Proteomes" id="UP000000268">
    <property type="component" value="Chromosome"/>
</dbReference>
<dbReference type="GO" id="GO:0003950">
    <property type="term" value="F:NAD+ poly-ADP-ribosyltransferase activity"/>
    <property type="evidence" value="ECO:0007669"/>
    <property type="project" value="InterPro"/>
</dbReference>
<dbReference type="GO" id="GO:0000215">
    <property type="term" value="F:tRNA 2'-phosphotransferase activity"/>
    <property type="evidence" value="ECO:0007669"/>
    <property type="project" value="TreeGrafter"/>
</dbReference>
<dbReference type="GO" id="GO:0006388">
    <property type="term" value="P:tRNA splicing, via endonucleolytic cleavage and ligation"/>
    <property type="evidence" value="ECO:0007669"/>
    <property type="project" value="UniProtKB-UniRule"/>
</dbReference>
<dbReference type="Gene3D" id="3.20.170.30">
    <property type="match status" value="1"/>
</dbReference>
<dbReference type="Gene3D" id="1.10.10.970">
    <property type="entry name" value="RNA 2'-phosphotransferase, Tpt1/KptA family, N-terminal domain"/>
    <property type="match status" value="1"/>
</dbReference>
<dbReference type="HAMAP" id="MF_00299">
    <property type="entry name" value="KptA"/>
    <property type="match status" value="1"/>
</dbReference>
<dbReference type="InterPro" id="IPR002745">
    <property type="entry name" value="Ptrans_KptA/Tpt1"/>
</dbReference>
<dbReference type="InterPro" id="IPR042081">
    <property type="entry name" value="RNA_2'-PTrans_C"/>
</dbReference>
<dbReference type="InterPro" id="IPR022928">
    <property type="entry name" value="RNA_2'-PTrans_KptA"/>
</dbReference>
<dbReference type="InterPro" id="IPR042080">
    <property type="entry name" value="RNA_2'-PTrans_N"/>
</dbReference>
<dbReference type="NCBIfam" id="NF002014">
    <property type="entry name" value="PRK00819.1-4"/>
    <property type="match status" value="1"/>
</dbReference>
<dbReference type="PANTHER" id="PTHR12684">
    <property type="entry name" value="PUTATIVE PHOSPHOTRANSFERASE"/>
    <property type="match status" value="1"/>
</dbReference>
<dbReference type="PANTHER" id="PTHR12684:SF2">
    <property type="entry name" value="TRNA 2'-PHOSPHOTRANSFERASE 1"/>
    <property type="match status" value="1"/>
</dbReference>
<dbReference type="Pfam" id="PF01885">
    <property type="entry name" value="PTS_2-RNA"/>
    <property type="match status" value="1"/>
</dbReference>
<dbReference type="SUPFAM" id="SSF56399">
    <property type="entry name" value="ADP-ribosylation"/>
    <property type="match status" value="1"/>
</dbReference>
<evidence type="ECO:0000255" key="1">
    <source>
        <dbReference type="HAMAP-Rule" id="MF_00299"/>
    </source>
</evidence>
<reference key="1">
    <citation type="journal article" date="2008" name="Proc. Natl. Acad. Sci. U.S.A.">
        <title>Niche adaptation and genome expansion in the chlorophyll d-producing cyanobacterium Acaryochloris marina.</title>
        <authorList>
            <person name="Swingley W.D."/>
            <person name="Chen M."/>
            <person name="Cheung P.C."/>
            <person name="Conrad A.L."/>
            <person name="Dejesa L.C."/>
            <person name="Hao J."/>
            <person name="Honchak B.M."/>
            <person name="Karbach L.E."/>
            <person name="Kurdoglu A."/>
            <person name="Lahiri S."/>
            <person name="Mastrian S.D."/>
            <person name="Miyashita H."/>
            <person name="Page L."/>
            <person name="Ramakrishna P."/>
            <person name="Satoh S."/>
            <person name="Sattley W.M."/>
            <person name="Shimada Y."/>
            <person name="Taylor H.L."/>
            <person name="Tomo T."/>
            <person name="Tsuchiya T."/>
            <person name="Wang Z.T."/>
            <person name="Raymond J."/>
            <person name="Mimuro M."/>
            <person name="Blankenship R.E."/>
            <person name="Touchman J.W."/>
        </authorList>
    </citation>
    <scope>NUCLEOTIDE SEQUENCE [LARGE SCALE GENOMIC DNA]</scope>
    <source>
        <strain>MBIC 11017</strain>
    </source>
</reference>
<organism>
    <name type="scientific">Acaryochloris marina (strain MBIC 11017)</name>
    <dbReference type="NCBI Taxonomy" id="329726"/>
    <lineage>
        <taxon>Bacteria</taxon>
        <taxon>Bacillati</taxon>
        <taxon>Cyanobacteriota</taxon>
        <taxon>Cyanophyceae</taxon>
        <taxon>Acaryochloridales</taxon>
        <taxon>Acaryochloridaceae</taxon>
        <taxon>Acaryochloris</taxon>
    </lineage>
</organism>
<proteinExistence type="inferred from homology"/>
<gene>
    <name evidence="1" type="primary">kptA</name>
    <name type="ordered locus">AM1_4608</name>
</gene>
<protein>
    <recommendedName>
        <fullName evidence="1">Probable RNA 2'-phosphotransferase</fullName>
        <ecNumber evidence="1">2.7.1.-</ecNumber>
    </recommendedName>
</protein>
<accession>B0C090</accession>
<name>KPTA_ACAM1</name>
<feature type="chain" id="PRO_1000078980" description="Probable RNA 2'-phosphotransferase">
    <location>
        <begin position="1"/>
        <end position="181"/>
    </location>
</feature>
<comment type="function">
    <text evidence="1">Removes the 2'-phosphate from RNA via an intermediate in which the phosphate is ADP-ribosylated by NAD followed by a presumed transesterification to release the RNA and generate ADP-ribose 1''-2''-cyclic phosphate (APPR&gt;P). May function as an ADP-ribosylase.</text>
</comment>
<comment type="similarity">
    <text evidence="1">Belongs to the KptA/TPT1 family.</text>
</comment>